<gene>
    <name evidence="6 7" type="primary">mcm</name>
    <name evidence="11" type="synonym">mcmA</name>
    <name evidence="8" type="ordered locus">RHOS4_07790</name>
    <name evidence="11" type="ORF">RSP_2192</name>
</gene>
<proteinExistence type="evidence at protein level"/>
<organism>
    <name type="scientific">Cereibacter sphaeroides (strain ATCC 17023 / DSM 158 / JCM 6121 / CCUG 31486 / LMG 2827 / NBRC 12203 / NCIMB 8253 / ATH 2.4.1.)</name>
    <name type="common">Rhodobacter sphaeroides</name>
    <dbReference type="NCBI Taxonomy" id="272943"/>
    <lineage>
        <taxon>Bacteria</taxon>
        <taxon>Pseudomonadati</taxon>
        <taxon>Pseudomonadota</taxon>
        <taxon>Alphaproteobacteria</taxon>
        <taxon>Rhodobacterales</taxon>
        <taxon>Paracoccaceae</taxon>
        <taxon>Cereibacter</taxon>
    </lineage>
</organism>
<reference key="1">
    <citation type="submission" date="2005-09" db="EMBL/GenBank/DDBJ databases">
        <title>Complete sequence of chromosome 1 of Rhodobacter sphaeroides 2.4.1.</title>
        <authorList>
            <person name="Copeland A."/>
            <person name="Lucas S."/>
            <person name="Lapidus A."/>
            <person name="Barry K."/>
            <person name="Detter J.C."/>
            <person name="Glavina T."/>
            <person name="Hammon N."/>
            <person name="Israni S."/>
            <person name="Pitluck S."/>
            <person name="Richardson P."/>
            <person name="Mackenzie C."/>
            <person name="Choudhary M."/>
            <person name="Larimer F."/>
            <person name="Hauser L.J."/>
            <person name="Land M."/>
            <person name="Donohue T.J."/>
            <person name="Kaplan S."/>
        </authorList>
    </citation>
    <scope>NUCLEOTIDE SEQUENCE [LARGE SCALE GENOMIC DNA]</scope>
    <source>
        <strain>ATCC 17023 / DSM 158 / JCM 6121 / CCUG 31486 / LMG 2827 / NBRC 12203 / NCIMB 8253 / ATH 2.4.1.</strain>
    </source>
</reference>
<reference key="2">
    <citation type="journal article" date="2006" name="Mol. Microbiol.">
        <title>Study of an alternate glyoxylate cycle for acetate assimilation by Rhodobacter sphaeroides.</title>
        <authorList>
            <person name="Alber B.E."/>
            <person name="Spanheimer R."/>
            <person name="Ebenau-Jehle C."/>
            <person name="Fuchs G."/>
        </authorList>
    </citation>
    <scope>IDENTIFICATION BY MASS SPECTROMETRY</scope>
    <scope>INDUCTION</scope>
    <scope>FUNCTION</scope>
    <source>
        <strain>ATCC 17023 / DSM 158 / JCM 6121 / CCUG 31486 / LMG 2827 / NBRC 12203 / NCIMB 8253 / ATH 2.4.1.</strain>
    </source>
</reference>
<reference key="3">
    <citation type="journal article" date="2008" name="J. Biol. Chem.">
        <title>Ethylmalonyl-CoA mutase from Rhodobacter sphaeroides defines a new subclade of coenzyme B12-dependent acyl-CoA mutases.</title>
        <authorList>
            <person name="Erb T.J."/>
            <person name="Retey J."/>
            <person name="Fuchs G."/>
            <person name="Alber B.E."/>
        </authorList>
    </citation>
    <scope>FUNCTION</scope>
    <scope>CATALYTIC ACTIVITY</scope>
    <scope>COFACTOR</scope>
    <source>
        <strain>ATCC 17023 / DSM 158 / JCM 6121 / CCUG 31486 / LMG 2827 / NBRC 12203 / NCIMB 8253 / ATH 2.4.1.</strain>
    </source>
</reference>
<dbReference type="EC" id="5.4.99.2" evidence="5"/>
<dbReference type="EMBL" id="CP000143">
    <property type="protein sequence ID" value="ABA78347.1"/>
    <property type="molecule type" value="Genomic_DNA"/>
</dbReference>
<dbReference type="RefSeq" id="WP_011337301.1">
    <property type="nucleotide sequence ID" value="NC_007493.2"/>
</dbReference>
<dbReference type="RefSeq" id="YP_352248.1">
    <property type="nucleotide sequence ID" value="NC_007493.2"/>
</dbReference>
<dbReference type="SMR" id="Q3J4D7"/>
<dbReference type="STRING" id="272943.RSP_2192"/>
<dbReference type="EnsemblBacteria" id="ABA78347">
    <property type="protein sequence ID" value="ABA78347"/>
    <property type="gene ID" value="RSP_2192"/>
</dbReference>
<dbReference type="GeneID" id="3719665"/>
<dbReference type="KEGG" id="rsp:RSP_2192"/>
<dbReference type="PATRIC" id="fig|272943.9.peg.1091"/>
<dbReference type="eggNOG" id="COG1884">
    <property type="taxonomic scope" value="Bacteria"/>
</dbReference>
<dbReference type="eggNOG" id="COG2185">
    <property type="taxonomic scope" value="Bacteria"/>
</dbReference>
<dbReference type="OrthoDB" id="9762378at2"/>
<dbReference type="PhylomeDB" id="Q3J4D7"/>
<dbReference type="BioCyc" id="MetaCyc:MONOMER-13591"/>
<dbReference type="UniPathway" id="UPA00945">
    <property type="reaction ID" value="UER00910"/>
</dbReference>
<dbReference type="Proteomes" id="UP000002703">
    <property type="component" value="Chromosome 1"/>
</dbReference>
<dbReference type="GO" id="GO:0005737">
    <property type="term" value="C:cytoplasm"/>
    <property type="evidence" value="ECO:0007669"/>
    <property type="project" value="TreeGrafter"/>
</dbReference>
<dbReference type="GO" id="GO:0031419">
    <property type="term" value="F:cobalamin binding"/>
    <property type="evidence" value="ECO:0007669"/>
    <property type="project" value="UniProtKB-KW"/>
</dbReference>
<dbReference type="GO" id="GO:0046872">
    <property type="term" value="F:metal ion binding"/>
    <property type="evidence" value="ECO:0007669"/>
    <property type="project" value="UniProtKB-KW"/>
</dbReference>
<dbReference type="GO" id="GO:0004494">
    <property type="term" value="F:methylmalonyl-CoA mutase activity"/>
    <property type="evidence" value="ECO:0007669"/>
    <property type="project" value="UniProtKB-EC"/>
</dbReference>
<dbReference type="GO" id="GO:0019678">
    <property type="term" value="P:propionate metabolic process, methylmalonyl pathway"/>
    <property type="evidence" value="ECO:0007669"/>
    <property type="project" value="TreeGrafter"/>
</dbReference>
<dbReference type="CDD" id="cd02071">
    <property type="entry name" value="MM_CoA_mut_B12_BD"/>
    <property type="match status" value="1"/>
</dbReference>
<dbReference type="CDD" id="cd03679">
    <property type="entry name" value="MM_CoA_mutase_alpha_like"/>
    <property type="match status" value="1"/>
</dbReference>
<dbReference type="FunFam" id="3.40.50.280:FF:000002">
    <property type="entry name" value="Methylmalonyl-CoA mutase, mitochondrial"/>
    <property type="match status" value="1"/>
</dbReference>
<dbReference type="FunFam" id="3.20.20.240:FF:000001">
    <property type="entry name" value="Probable methylmalonyl-coa mutase"/>
    <property type="match status" value="1"/>
</dbReference>
<dbReference type="Gene3D" id="3.40.50.280">
    <property type="entry name" value="Cobalamin-binding domain"/>
    <property type="match status" value="1"/>
</dbReference>
<dbReference type="Gene3D" id="3.20.20.240">
    <property type="entry name" value="Methylmalonyl-CoA mutase"/>
    <property type="match status" value="1"/>
</dbReference>
<dbReference type="InterPro" id="IPR006159">
    <property type="entry name" value="Acid_CoA_mut_C"/>
</dbReference>
<dbReference type="InterPro" id="IPR016176">
    <property type="entry name" value="Cbl-dep_enz_cat"/>
</dbReference>
<dbReference type="InterPro" id="IPR006158">
    <property type="entry name" value="Cobalamin-bd"/>
</dbReference>
<dbReference type="InterPro" id="IPR036724">
    <property type="entry name" value="Cobalamin-bd_sf"/>
</dbReference>
<dbReference type="InterPro" id="IPR006099">
    <property type="entry name" value="MeMalonylCoA_mutase_a/b_cat"/>
</dbReference>
<dbReference type="InterPro" id="IPR006098">
    <property type="entry name" value="MMCoA_mutase_a_cat"/>
</dbReference>
<dbReference type="NCBIfam" id="TIGR00640">
    <property type="entry name" value="acid_CoA_mut_C"/>
    <property type="match status" value="1"/>
</dbReference>
<dbReference type="NCBIfam" id="TIGR00641">
    <property type="entry name" value="acid_CoA_mut_N"/>
    <property type="match status" value="1"/>
</dbReference>
<dbReference type="NCBIfam" id="NF006944">
    <property type="entry name" value="PRK09426.1"/>
    <property type="match status" value="1"/>
</dbReference>
<dbReference type="PANTHER" id="PTHR48101:SF4">
    <property type="entry name" value="METHYLMALONYL-COA MUTASE, MITOCHONDRIAL"/>
    <property type="match status" value="1"/>
</dbReference>
<dbReference type="PANTHER" id="PTHR48101">
    <property type="entry name" value="METHYLMALONYL-COA MUTASE, MITOCHONDRIAL-RELATED"/>
    <property type="match status" value="1"/>
</dbReference>
<dbReference type="Pfam" id="PF02310">
    <property type="entry name" value="B12-binding"/>
    <property type="match status" value="1"/>
</dbReference>
<dbReference type="Pfam" id="PF01642">
    <property type="entry name" value="MM_CoA_mutase"/>
    <property type="match status" value="1"/>
</dbReference>
<dbReference type="SUPFAM" id="SSF52242">
    <property type="entry name" value="Cobalamin (vitamin B12)-binding domain"/>
    <property type="match status" value="1"/>
</dbReference>
<dbReference type="SUPFAM" id="SSF51703">
    <property type="entry name" value="Cobalamin (vitamin B12)-dependent enzymes"/>
    <property type="match status" value="1"/>
</dbReference>
<dbReference type="PROSITE" id="PS51332">
    <property type="entry name" value="B12_BINDING"/>
    <property type="match status" value="1"/>
</dbReference>
<dbReference type="PROSITE" id="PS00544">
    <property type="entry name" value="METMALONYL_COA_MUTASE"/>
    <property type="match status" value="1"/>
</dbReference>
<feature type="chain" id="PRO_0000447589" description="Methylmalonyl-CoA mutase">
    <location>
        <begin position="1"/>
        <end position="709"/>
    </location>
</feature>
<feature type="domain" description="B12-binding" evidence="3">
    <location>
        <begin position="579"/>
        <end position="709"/>
    </location>
</feature>
<feature type="binding site" evidence="2">
    <location>
        <begin position="73"/>
        <end position="77"/>
    </location>
    <ligand>
        <name>substrate</name>
    </ligand>
</feature>
<feature type="binding site" evidence="2">
    <location>
        <begin position="183"/>
        <end position="185"/>
    </location>
    <ligand>
        <name>substrate</name>
    </ligand>
</feature>
<feature type="binding site" evidence="2">
    <location>
        <position position="195"/>
    </location>
    <ligand>
        <name>substrate</name>
    </ligand>
</feature>
<feature type="binding site" evidence="2">
    <location>
        <position position="222"/>
    </location>
    <ligand>
        <name>substrate</name>
    </ligand>
</feature>
<feature type="binding site" evidence="2">
    <location>
        <position position="232"/>
    </location>
    <ligand>
        <name>substrate</name>
    </ligand>
</feature>
<feature type="binding site" evidence="2">
    <location>
        <begin position="271"/>
        <end position="273"/>
    </location>
    <ligand>
        <name>substrate</name>
    </ligand>
</feature>
<feature type="binding site" description="axial binding residue" evidence="2">
    <location>
        <position position="592"/>
    </location>
    <ligand>
        <name>adenosylcob(III)alamin</name>
        <dbReference type="ChEBI" id="CHEBI:18408"/>
    </ligand>
    <ligandPart>
        <name>Co</name>
        <dbReference type="ChEBI" id="CHEBI:27638"/>
    </ligandPart>
</feature>
<keyword id="KW-0846">Cobalamin</keyword>
<keyword id="KW-0170">Cobalt</keyword>
<keyword id="KW-0413">Isomerase</keyword>
<keyword id="KW-0479">Metal-binding</keyword>
<keyword id="KW-1185">Reference proteome</keyword>
<comment type="function">
    <text evidence="5 9">Radical enzyme that catalyzes the transformation of (2R)-methylmalonyl-CoA to succinyl-CoA. Is involved in the ethylmalonyl-CoA pathway for acetyl-CoA assimilation required for R.sphaeroides growth on acetate as sole carbon source.</text>
</comment>
<comment type="catalytic activity">
    <reaction evidence="5">
        <text>(R)-methylmalonyl-CoA = succinyl-CoA</text>
        <dbReference type="Rhea" id="RHEA:22888"/>
        <dbReference type="ChEBI" id="CHEBI:57292"/>
        <dbReference type="ChEBI" id="CHEBI:57326"/>
        <dbReference type="EC" id="5.4.99.2"/>
    </reaction>
    <physiologicalReaction direction="left-to-right" evidence="10">
        <dbReference type="Rhea" id="RHEA:22889"/>
    </physiologicalReaction>
</comment>
<comment type="cofactor">
    <cofactor evidence="5">
        <name>adenosylcob(III)alamin</name>
        <dbReference type="ChEBI" id="CHEBI:18408"/>
    </cofactor>
</comment>
<comment type="pathway">
    <text evidence="10">Metabolic intermediate metabolism; propanoyl-CoA degradation; succinyl-CoA from propanoyl-CoA: step 3/3.</text>
</comment>
<comment type="subunit">
    <text evidence="1">Homodimer.</text>
</comment>
<comment type="induction">
    <text evidence="4">Strongly up-regulated during growth on acetate as sole carbon source.</text>
</comment>
<comment type="similarity">
    <text evidence="8">Belongs to the methylmalonyl-CoA mutase family.</text>
</comment>
<evidence type="ECO:0000250" key="1">
    <source>
        <dbReference type="UniProtKB" id="O86028"/>
    </source>
</evidence>
<evidence type="ECO:0000250" key="2">
    <source>
        <dbReference type="UniProtKB" id="P22033"/>
    </source>
</evidence>
<evidence type="ECO:0000255" key="3">
    <source>
        <dbReference type="PROSITE-ProRule" id="PRU00666"/>
    </source>
</evidence>
<evidence type="ECO:0000269" key="4">
    <source>
    </source>
</evidence>
<evidence type="ECO:0000269" key="5">
    <source>
    </source>
</evidence>
<evidence type="ECO:0000303" key="6">
    <source>
    </source>
</evidence>
<evidence type="ECO:0000303" key="7">
    <source>
    </source>
</evidence>
<evidence type="ECO:0000305" key="8"/>
<evidence type="ECO:0000305" key="9">
    <source>
    </source>
</evidence>
<evidence type="ECO:0000305" key="10">
    <source>
    </source>
</evidence>
<evidence type="ECO:0000312" key="11">
    <source>
        <dbReference type="EMBL" id="ABA78347.1"/>
    </source>
</evidence>
<sequence length="709" mass="77034">MTEDLDAWRKLAEKELKGKSPDSLTWNTLEGIPVKPLYTRADLAGMEHLDGLPGVAPFTRGVRATMYAGRPWTIRQYAGFSTAEASNAFYRKALAAGQQGVSVAFDLATHRGYDSDHPRVVGDVGKAGVAIDSIEDMKILFNGIPLEKISVSMTMNGAVIPILANFIVTGEEQGVPRAALSGTIQNDILKEFMVRNTYIYPPEPSMRIIADIIEYTSKEMPKFNSISISGYHMQEAGANLVQELAYTLADGREYVRAALARGMNVDDFAGRLSFFFAIGMNFFMEAAKLRAARLLWHRIMSEFAPKKPGSLMLRTHCQTSGVSLQEQDPYNNVIRTAYEAMSAALGGTQSLHTNALDEAIALPTEFSARIARNTQIILQEETGVTRVVDPLAGSYYVESLTAELAEKAWALIEEVEAMGGMTKAVASGMPKLRIEESAARRQAAIDRGEDVIVGVNKYRLAKEDPIEILDIDNVAVRDAQIARLEKMRATRDEAACQAALDELTRRAAEGGNLLEAAVDASRARASVGEISMAMEKVFGRHRAEVKTLSGVYGAAYEGDDGFAQIQRDVESFAEEEGRRPRMLVVKMGQDGHDRGAKVIATAFADIGFDVDVGTLFQTPEEAAQDAIDNDVHVVGISSLAAGHKTLAPKLIEALKEKGAGEILVICGGVIPQQDYDFLQQAGVKAIFGPGTNIPSAAKHILDLIREARS</sequence>
<name>MCM_CERS4</name>
<accession>Q3J4D7</accession>
<protein>
    <recommendedName>
        <fullName evidence="6 7">Methylmalonyl-CoA mutase</fullName>
        <shortName>MCM</shortName>
        <ecNumber evidence="5">5.4.99.2</ecNumber>
    </recommendedName>
</protein>